<feature type="chain" id="PRO_0000269579" description="Hemin import ATP-binding protein HmuV">
    <location>
        <begin position="1"/>
        <end position="262"/>
    </location>
</feature>
<feature type="domain" description="ABC transporter" evidence="1">
    <location>
        <begin position="3"/>
        <end position="244"/>
    </location>
</feature>
<feature type="binding site" evidence="1">
    <location>
        <begin position="35"/>
        <end position="42"/>
    </location>
    <ligand>
        <name>ATP</name>
        <dbReference type="ChEBI" id="CHEBI:30616"/>
    </ligand>
</feature>
<evidence type="ECO:0000255" key="1">
    <source>
        <dbReference type="HAMAP-Rule" id="MF_01718"/>
    </source>
</evidence>
<proteinExistence type="inferred from homology"/>
<reference key="1">
    <citation type="journal article" date="2003" name="Nat. Genet.">
        <title>Comparative analysis of the genome sequences of Bordetella pertussis, Bordetella parapertussis and Bordetella bronchiseptica.</title>
        <authorList>
            <person name="Parkhill J."/>
            <person name="Sebaihia M."/>
            <person name="Preston A."/>
            <person name="Murphy L.D."/>
            <person name="Thomson N.R."/>
            <person name="Harris D.E."/>
            <person name="Holden M.T.G."/>
            <person name="Churcher C.M."/>
            <person name="Bentley S.D."/>
            <person name="Mungall K.L."/>
            <person name="Cerdeno-Tarraga A.-M."/>
            <person name="Temple L."/>
            <person name="James K.D."/>
            <person name="Harris B."/>
            <person name="Quail M.A."/>
            <person name="Achtman M."/>
            <person name="Atkin R."/>
            <person name="Baker S."/>
            <person name="Basham D."/>
            <person name="Bason N."/>
            <person name="Cherevach I."/>
            <person name="Chillingworth T."/>
            <person name="Collins M."/>
            <person name="Cronin A."/>
            <person name="Davis P."/>
            <person name="Doggett J."/>
            <person name="Feltwell T."/>
            <person name="Goble A."/>
            <person name="Hamlin N."/>
            <person name="Hauser H."/>
            <person name="Holroyd S."/>
            <person name="Jagels K."/>
            <person name="Leather S."/>
            <person name="Moule S."/>
            <person name="Norberczak H."/>
            <person name="O'Neil S."/>
            <person name="Ormond D."/>
            <person name="Price C."/>
            <person name="Rabbinowitsch E."/>
            <person name="Rutter S."/>
            <person name="Sanders M."/>
            <person name="Saunders D."/>
            <person name="Seeger K."/>
            <person name="Sharp S."/>
            <person name="Simmonds M."/>
            <person name="Skelton J."/>
            <person name="Squares R."/>
            <person name="Squares S."/>
            <person name="Stevens K."/>
            <person name="Unwin L."/>
            <person name="Whitehead S."/>
            <person name="Barrell B.G."/>
            <person name="Maskell D.J."/>
        </authorList>
    </citation>
    <scope>NUCLEOTIDE SEQUENCE [LARGE SCALE GENOMIC DNA]</scope>
    <source>
        <strain>Tohama I / ATCC BAA-589 / NCTC 13251</strain>
    </source>
</reference>
<name>HMUV_BORPE</name>
<accession>Q7W025</accession>
<dbReference type="EC" id="7.6.2.-" evidence="1"/>
<dbReference type="EMBL" id="BX640411">
    <property type="protein sequence ID" value="CAE40720.1"/>
    <property type="molecule type" value="Genomic_DNA"/>
</dbReference>
<dbReference type="RefSeq" id="NP_879216.1">
    <property type="nucleotide sequence ID" value="NC_002929.2"/>
</dbReference>
<dbReference type="RefSeq" id="WP_010929751.1">
    <property type="nucleotide sequence ID" value="NZ_CP039022.1"/>
</dbReference>
<dbReference type="SMR" id="Q7W025"/>
<dbReference type="STRING" id="257313.BP0343"/>
<dbReference type="TCDB" id="3.A.1.14.20">
    <property type="family name" value="the atp-binding cassette (abc) superfamily"/>
</dbReference>
<dbReference type="PaxDb" id="257313-BP0343"/>
<dbReference type="KEGG" id="bpe:BP0343"/>
<dbReference type="PATRIC" id="fig|257313.5.peg.371"/>
<dbReference type="eggNOG" id="COG1120">
    <property type="taxonomic scope" value="Bacteria"/>
</dbReference>
<dbReference type="HOGENOM" id="CLU_000604_1_11_4"/>
<dbReference type="Proteomes" id="UP000002676">
    <property type="component" value="Chromosome"/>
</dbReference>
<dbReference type="GO" id="GO:0005886">
    <property type="term" value="C:plasma membrane"/>
    <property type="evidence" value="ECO:0007669"/>
    <property type="project" value="UniProtKB-SubCell"/>
</dbReference>
<dbReference type="GO" id="GO:0005524">
    <property type="term" value="F:ATP binding"/>
    <property type="evidence" value="ECO:0007669"/>
    <property type="project" value="UniProtKB-KW"/>
</dbReference>
<dbReference type="GO" id="GO:0016887">
    <property type="term" value="F:ATP hydrolysis activity"/>
    <property type="evidence" value="ECO:0007669"/>
    <property type="project" value="InterPro"/>
</dbReference>
<dbReference type="CDD" id="cd03214">
    <property type="entry name" value="ABC_Iron-Siderophores_B12_Hemin"/>
    <property type="match status" value="1"/>
</dbReference>
<dbReference type="Gene3D" id="3.40.50.300">
    <property type="entry name" value="P-loop containing nucleotide triphosphate hydrolases"/>
    <property type="match status" value="1"/>
</dbReference>
<dbReference type="InterPro" id="IPR003593">
    <property type="entry name" value="AAA+_ATPase"/>
</dbReference>
<dbReference type="InterPro" id="IPR003439">
    <property type="entry name" value="ABC_transporter-like_ATP-bd"/>
</dbReference>
<dbReference type="InterPro" id="IPR017871">
    <property type="entry name" value="ABC_transporter-like_CS"/>
</dbReference>
<dbReference type="InterPro" id="IPR027417">
    <property type="entry name" value="P-loop_NTPase"/>
</dbReference>
<dbReference type="NCBIfam" id="NF010068">
    <property type="entry name" value="PRK13548.1"/>
    <property type="match status" value="1"/>
</dbReference>
<dbReference type="PANTHER" id="PTHR42794">
    <property type="entry name" value="HEMIN IMPORT ATP-BINDING PROTEIN HMUV"/>
    <property type="match status" value="1"/>
</dbReference>
<dbReference type="PANTHER" id="PTHR42794:SF1">
    <property type="entry name" value="HEMIN IMPORT ATP-BINDING PROTEIN HMUV"/>
    <property type="match status" value="1"/>
</dbReference>
<dbReference type="Pfam" id="PF00005">
    <property type="entry name" value="ABC_tran"/>
    <property type="match status" value="1"/>
</dbReference>
<dbReference type="SMART" id="SM00382">
    <property type="entry name" value="AAA"/>
    <property type="match status" value="1"/>
</dbReference>
<dbReference type="SUPFAM" id="SSF52540">
    <property type="entry name" value="P-loop containing nucleoside triphosphate hydrolases"/>
    <property type="match status" value="1"/>
</dbReference>
<dbReference type="PROSITE" id="PS00211">
    <property type="entry name" value="ABC_TRANSPORTER_1"/>
    <property type="match status" value="1"/>
</dbReference>
<dbReference type="PROSITE" id="PS50893">
    <property type="entry name" value="ABC_TRANSPORTER_2"/>
    <property type="match status" value="1"/>
</dbReference>
<dbReference type="PROSITE" id="PS51261">
    <property type="entry name" value="HMUV"/>
    <property type="match status" value="1"/>
</dbReference>
<comment type="function">
    <text evidence="1">Part of the ABC transporter complex HmuTUV involved in hemin import. Responsible for energy coupling to the transport system.</text>
</comment>
<comment type="subunit">
    <text evidence="1">The complex is composed of two ATP-binding proteins (HmuV), two transmembrane proteins (HmuU) and a solute-binding protein (HmuT).</text>
</comment>
<comment type="subcellular location">
    <subcellularLocation>
        <location evidence="1">Cell inner membrane</location>
        <topology evidence="1">Peripheral membrane protein</topology>
    </subcellularLocation>
</comment>
<comment type="similarity">
    <text evidence="1">Belongs to the ABC transporter superfamily. Heme (hemin) importer (TC 3.A.1.14.5) family.</text>
</comment>
<sequence>MTLQARNLTLARGGAPILTDVSLTLAPGALVGLLGANGAGKSTLLAALAGELAPRSGQVFLGDADLATLSARQLARRRAVLPQKPSLSFDLGVSDVVGMGAYPFPELDPAAVRQLVRDALEQAGVTHLAQRRYPQLSGGEQQRVQFARVLAQCHAMHAPGQTRYLMLDEPISNLDPRHQMELLATARALAHEAGMGVLVIVHDINQAARWCDTLALLADGRLAALGPPADVLTPDHMRRVYGIEADVLAHPTLPGRLLVLAR</sequence>
<keyword id="KW-0067">ATP-binding</keyword>
<keyword id="KW-0997">Cell inner membrane</keyword>
<keyword id="KW-1003">Cell membrane</keyword>
<keyword id="KW-0472">Membrane</keyword>
<keyword id="KW-0547">Nucleotide-binding</keyword>
<keyword id="KW-1185">Reference proteome</keyword>
<keyword id="KW-1278">Translocase</keyword>
<keyword id="KW-0813">Transport</keyword>
<protein>
    <recommendedName>
        <fullName evidence="1">Hemin import ATP-binding protein HmuV</fullName>
        <ecNumber evidence="1">7.6.2.-</ecNumber>
    </recommendedName>
</protein>
<organism>
    <name type="scientific">Bordetella pertussis (strain Tohama I / ATCC BAA-589 / NCTC 13251)</name>
    <dbReference type="NCBI Taxonomy" id="257313"/>
    <lineage>
        <taxon>Bacteria</taxon>
        <taxon>Pseudomonadati</taxon>
        <taxon>Pseudomonadota</taxon>
        <taxon>Betaproteobacteria</taxon>
        <taxon>Burkholderiales</taxon>
        <taxon>Alcaligenaceae</taxon>
        <taxon>Bordetella</taxon>
    </lineage>
</organism>
<gene>
    <name evidence="1" type="primary">hmuV</name>
    <name type="synonym">bhuV</name>
    <name type="ordered locus">BP0343</name>
</gene>